<evidence type="ECO:0000250" key="1">
    <source>
        <dbReference type="UniProtKB" id="P16766"/>
    </source>
</evidence>
<evidence type="ECO:0000256" key="2">
    <source>
        <dbReference type="SAM" id="MobiDB-lite"/>
    </source>
</evidence>
<evidence type="ECO:0000305" key="3"/>
<accession>F5HE12</accession>
<gene>
    <name type="primary">UL35</name>
</gene>
<comment type="function">
    <molecule>Isoform UL35</molecule>
    <text evidence="1">Plays important role in immediate-early gene expression through interaction with UL82. Forms nuclear bodies in host nucleus, independently of PML. In turn, UL35 nuclear bodies associate with and remodel PML bodies. Through interaction with host DCAF1, causes cells to accumulate in the G2 phase of the cell cycle by inducing a DNA damage response. Regulates viral assembly by controlling the localization of the essential gB through regulation of a retrograde transport pathway. This modulation occurs via binding and inhibition of host sorting nexin 5/SNX5. Also plays a role in the inhibition of pattern recognition receptor-mediated type I interferon signaling at the level of TBK1.</text>
</comment>
<comment type="function">
    <molecule>Isoform UL35A</molecule>
    <text evidence="1">Promotes cytoplasmic UL82 accumulation and inhibits UL35-containing nuclear bodies formation. Regulates viral assembly by controlling the localization of the essential gB through regulation of a retrograde transport pathway. This modulation occurs via binding and inhibition of host sorting nexin 5/SNX5.</text>
</comment>
<comment type="subunit">
    <molecule>Isoform UL35</molecule>
    <text evidence="1">Interacts with UL82. Interacts with isoform UL35A. Interacts with host UBP7; this interaction significantly inhibits the ability of USP7 to form nuclear bodies. Interacts with host DCAF1 (via C-terminus). Interacts with host SNX5; this interaction allows proper gB localization during viral assembly. Interacts with host TBK1; this interaction prevents type I interferon production.</text>
</comment>
<comment type="subunit">
    <molecule>Isoform UL35A</molecule>
    <text evidence="1">Interacts with UL82. Interacts with isoform UL35. Interacts with host UBP7; this interaction significantly inhibits the ability of USP7 to form nuclear bodies. Interacts with host SNX5; this interaction allows proper gB localization during viral assembly.</text>
</comment>
<comment type="subcellular location">
    <molecule>Isoform UL35</molecule>
    <subcellularLocation>
        <location evidence="1">Virion tegument</location>
    </subcellularLocation>
    <subcellularLocation>
        <location evidence="1">Host nucleus</location>
    </subcellularLocation>
    <subcellularLocation>
        <location evidence="1">Host cytoplasm</location>
    </subcellularLocation>
    <text evidence="1">Found in nuclear bodies.</text>
</comment>
<comment type="subcellular location">
    <molecule>Isoform UL35A</molecule>
    <subcellularLocation>
        <location evidence="1">Host nucleus</location>
    </subcellularLocation>
    <subcellularLocation>
        <location evidence="1">Host cytoplasm</location>
    </subcellularLocation>
</comment>
<comment type="alternative products">
    <event type="alternative initiation"/>
    <isoform>
        <id>F5HE12-1</id>
        <name>UL35</name>
        <sequence type="displayed"/>
    </isoform>
    <isoform>
        <id>F5HE12-2</id>
        <name>UL35A</name>
        <sequence type="described" ref="VSP_044021"/>
    </isoform>
</comment>
<comment type="similarity">
    <text evidence="3">Belongs to the herpesviridae pp85 family.</text>
</comment>
<dbReference type="EMBL" id="AY446894">
    <property type="protein sequence ID" value="AAR31600.1"/>
    <property type="molecule type" value="Genomic_DNA"/>
</dbReference>
<dbReference type="RefSeq" id="YP_081494.1">
    <property type="nucleotide sequence ID" value="NC_006273.2"/>
</dbReference>
<dbReference type="SMR" id="F5HE12"/>
<dbReference type="BioGRID" id="1677983">
    <property type="interactions" value="7"/>
</dbReference>
<dbReference type="DNASU" id="3077429"/>
<dbReference type="GeneID" id="3077429"/>
<dbReference type="KEGG" id="vg:3077429"/>
<dbReference type="Reactome" id="R-HSA-9609690">
    <property type="pathway name" value="HCMV Early Events"/>
</dbReference>
<dbReference type="Reactome" id="R-HSA-9610379">
    <property type="pathway name" value="HCMV Late Events"/>
</dbReference>
<dbReference type="Proteomes" id="UP000000938">
    <property type="component" value="Segment"/>
</dbReference>
<dbReference type="GO" id="GO:0030430">
    <property type="term" value="C:host cell cytoplasm"/>
    <property type="evidence" value="ECO:0007669"/>
    <property type="project" value="UniProtKB-SubCell"/>
</dbReference>
<dbReference type="GO" id="GO:0042025">
    <property type="term" value="C:host cell nucleus"/>
    <property type="evidence" value="ECO:0000250"/>
    <property type="project" value="UniProtKB"/>
</dbReference>
<dbReference type="GO" id="GO:0019033">
    <property type="term" value="C:viral tegument"/>
    <property type="evidence" value="ECO:0000304"/>
    <property type="project" value="Reactome"/>
</dbReference>
<dbReference type="GO" id="GO:0039695">
    <property type="term" value="P:DNA-templated viral transcription"/>
    <property type="evidence" value="ECO:0000250"/>
    <property type="project" value="UniProtKB"/>
</dbReference>
<dbReference type="GO" id="GO:0039723">
    <property type="term" value="P:symbiont-mediated suppression of host cytoplasmic pattern recognition receptor signaling pathway via inhibition of TBK1 activity"/>
    <property type="evidence" value="ECO:0007669"/>
    <property type="project" value="UniProtKB-KW"/>
</dbReference>
<dbReference type="GO" id="GO:0039722">
    <property type="term" value="P:symbiont-mediated suppression of host toll-like receptor signaling pathway"/>
    <property type="evidence" value="ECO:0007669"/>
    <property type="project" value="UniProtKB-KW"/>
</dbReference>
<dbReference type="InterPro" id="IPR006731">
    <property type="entry name" value="Herpes_pp85"/>
</dbReference>
<dbReference type="Pfam" id="PF04637">
    <property type="entry name" value="Herpes_pp85"/>
    <property type="match status" value="1"/>
</dbReference>
<keyword id="KW-0024">Alternative initiation</keyword>
<keyword id="KW-1035">Host cytoplasm</keyword>
<keyword id="KW-1048">Host nucleus</keyword>
<keyword id="KW-0945">Host-virus interaction</keyword>
<keyword id="KW-1090">Inhibition of host innate immune response by virus</keyword>
<keyword id="KW-1223">Inhibition of host TBK1 by virus</keyword>
<keyword id="KW-1225">Inhibition of host TLR pathway by virus</keyword>
<keyword id="KW-1185">Reference proteome</keyword>
<keyword id="KW-0899">Viral immunoevasion</keyword>
<keyword id="KW-0946">Virion</keyword>
<keyword id="KW-0920">Virion tegument</keyword>
<protein>
    <recommendedName>
        <fullName>Tegument protein UL35</fullName>
    </recommendedName>
</protein>
<feature type="chain" id="PRO_0000418284" description="Tegument protein UL35">
    <location>
        <begin position="1"/>
        <end position="641"/>
    </location>
</feature>
<feature type="region of interest" description="Disordered" evidence="2">
    <location>
        <begin position="353"/>
        <end position="373"/>
    </location>
</feature>
<feature type="region of interest" description="Disordered" evidence="2">
    <location>
        <begin position="500"/>
        <end position="572"/>
    </location>
</feature>
<feature type="region of interest" description="Disordered" evidence="2">
    <location>
        <begin position="587"/>
        <end position="641"/>
    </location>
</feature>
<feature type="compositionally biased region" description="Acidic residues" evidence="2">
    <location>
        <begin position="358"/>
        <end position="367"/>
    </location>
</feature>
<feature type="compositionally biased region" description="Low complexity" evidence="2">
    <location>
        <begin position="500"/>
        <end position="563"/>
    </location>
</feature>
<feature type="compositionally biased region" description="Basic residues" evidence="2">
    <location>
        <begin position="589"/>
        <end position="599"/>
    </location>
</feature>
<feature type="compositionally biased region" description="Basic and acidic residues" evidence="2">
    <location>
        <begin position="632"/>
        <end position="641"/>
    </location>
</feature>
<feature type="splice variant" id="VSP_044021" description="In isoform UL35A." evidence="3">
    <location>
        <begin position="1"/>
        <end position="447"/>
    </location>
</feature>
<sequence>MAQGSRAPSGPPLPVLPVDDWLNFRVDLFGDEHRRLLLEMLTQGCSNFVGLLNFGVPSPVYALEALVDFQVRNAFMKVKPVAQEIIRICILANHYRNSRDVLRDLRTQLDVLYSEPLKTRLLRGLIRLCRAAQTGVKPEDISVHLGADDVTFGVLKRALVRLHRVRDALGLRASPEAEARYPRLTTYNLLFHPPPFTTVEAVDLCAENLSDVTQRRNRPLRCLTSIKRPGSRTLEDALNDMYLLLTLRHLQLRHALELQMMQDWVVERCNRLCDALYFCYTQAPETRQTFVTLVRGLELARQHSSPAFQPMLYNLLQLLTQLHEANVYLCPGYLHFSAYKLLKKIQSVSDARERGEFGDEDEEQENDGEPREAQLDLEADPTAREGELFFFSKNLYGNGEVFRVPEQPSRYLRRRMFVERPETLQIFYNFHEGKITTETYHLQRIYSMMIEGASRQTGLTPKRFMELLDRAPLGQESEPEITEHRDLFADVFRRPVTDAASSSSASSSSSSASPNSVSLPSARSSSTRTTTPASTYTSAGTSSTTGLLLSSSSLSGSHGISSADLEQPPRQRRRMVSVTLFSPYSVAYSHHRRHRRRRSPPPAPRGPAHTRFQGPDSMPSTSYGSDVEDPRDDLAENLRHL</sequence>
<proteinExistence type="inferred from homology"/>
<organismHost>
    <name type="scientific">Homo sapiens</name>
    <name type="common">Human</name>
    <dbReference type="NCBI Taxonomy" id="9606"/>
</organismHost>
<name>UL35_HCMVM</name>
<reference key="1">
    <citation type="journal article" date="2004" name="J. Gen. Virol.">
        <title>Genetic content of wild-type human cytomegalovirus.</title>
        <authorList>
            <person name="Dolan A."/>
            <person name="Cunningham C."/>
            <person name="Hector R.D."/>
            <person name="Hassan-Walker A.F."/>
            <person name="Lee L."/>
            <person name="Addison C."/>
            <person name="Dargan D.J."/>
            <person name="McGeoch D.J."/>
            <person name="Gatherer D."/>
            <person name="Emery V.C."/>
            <person name="Griffiths P.D."/>
            <person name="Sinzger C."/>
            <person name="McSharry B.P."/>
            <person name="Wilkinson G.W.G."/>
            <person name="Davison A.J."/>
        </authorList>
    </citation>
    <scope>NUCLEOTIDE SEQUENCE [LARGE SCALE GENOMIC DNA]</scope>
</reference>
<organism>
    <name type="scientific">Human cytomegalovirus (strain Merlin)</name>
    <name type="common">HHV-5</name>
    <name type="synonym">Human herpesvirus 5</name>
    <dbReference type="NCBI Taxonomy" id="295027"/>
    <lineage>
        <taxon>Viruses</taxon>
        <taxon>Duplodnaviria</taxon>
        <taxon>Heunggongvirae</taxon>
        <taxon>Peploviricota</taxon>
        <taxon>Herviviricetes</taxon>
        <taxon>Herpesvirales</taxon>
        <taxon>Orthoherpesviridae</taxon>
        <taxon>Betaherpesvirinae</taxon>
        <taxon>Cytomegalovirus</taxon>
        <taxon>Cytomegalovirus humanbeta5</taxon>
        <taxon>Human cytomegalovirus</taxon>
    </lineage>
</organism>